<dbReference type="EMBL" id="CP000247">
    <property type="protein sequence ID" value="ABG71289.1"/>
    <property type="molecule type" value="Genomic_DNA"/>
</dbReference>
<dbReference type="RefSeq" id="WP_000074795.1">
    <property type="nucleotide sequence ID" value="NC_008253.1"/>
</dbReference>
<dbReference type="SMR" id="Q0TCP0"/>
<dbReference type="KEGG" id="ecp:ECP_3309"/>
<dbReference type="HOGENOM" id="CLU_017584_9_1_6"/>
<dbReference type="Proteomes" id="UP000009182">
    <property type="component" value="Chromosome"/>
</dbReference>
<dbReference type="GO" id="GO:0003677">
    <property type="term" value="F:DNA binding"/>
    <property type="evidence" value="ECO:0007669"/>
    <property type="project" value="UniProtKB-KW"/>
</dbReference>
<dbReference type="GO" id="GO:0003700">
    <property type="term" value="F:DNA-binding transcription factor activity"/>
    <property type="evidence" value="ECO:0007669"/>
    <property type="project" value="UniProtKB-UniRule"/>
</dbReference>
<dbReference type="GO" id="GO:0045892">
    <property type="term" value="P:negative regulation of DNA-templated transcription"/>
    <property type="evidence" value="ECO:0007669"/>
    <property type="project" value="UniProtKB-UniRule"/>
</dbReference>
<dbReference type="CDD" id="cd07377">
    <property type="entry name" value="WHTH_GntR"/>
    <property type="match status" value="1"/>
</dbReference>
<dbReference type="FunFam" id="1.10.10.10:FF:000150">
    <property type="entry name" value="HTH-type transcriptional repressor NanR"/>
    <property type="match status" value="1"/>
</dbReference>
<dbReference type="FunFam" id="1.20.120.530:FF:000006">
    <property type="entry name" value="HTH-type transcriptional repressor NanR"/>
    <property type="match status" value="1"/>
</dbReference>
<dbReference type="Gene3D" id="1.20.120.530">
    <property type="entry name" value="GntR ligand-binding domain-like"/>
    <property type="match status" value="1"/>
</dbReference>
<dbReference type="Gene3D" id="1.10.10.10">
    <property type="entry name" value="Winged helix-like DNA-binding domain superfamily/Winged helix DNA-binding domain"/>
    <property type="match status" value="1"/>
</dbReference>
<dbReference type="HAMAP" id="MF_01236">
    <property type="entry name" value="HTH_NanR"/>
    <property type="match status" value="1"/>
</dbReference>
<dbReference type="InterPro" id="IPR011711">
    <property type="entry name" value="GntR_C"/>
</dbReference>
<dbReference type="InterPro" id="IPR008920">
    <property type="entry name" value="TF_FadR/GntR_C"/>
</dbReference>
<dbReference type="InterPro" id="IPR000524">
    <property type="entry name" value="Tscrpt_reg_HTH_GntR"/>
</dbReference>
<dbReference type="InterPro" id="IPR023730">
    <property type="entry name" value="Tscrpt_reg_NanR"/>
</dbReference>
<dbReference type="InterPro" id="IPR036388">
    <property type="entry name" value="WH-like_DNA-bd_sf"/>
</dbReference>
<dbReference type="InterPro" id="IPR036390">
    <property type="entry name" value="WH_DNA-bd_sf"/>
</dbReference>
<dbReference type="NCBIfam" id="NF003011">
    <property type="entry name" value="PRK03837.1"/>
    <property type="match status" value="1"/>
</dbReference>
<dbReference type="PANTHER" id="PTHR43537:SF53">
    <property type="entry name" value="HTH-TYPE TRANSCRIPTIONAL REPRESSOR NANR"/>
    <property type="match status" value="1"/>
</dbReference>
<dbReference type="PANTHER" id="PTHR43537">
    <property type="entry name" value="TRANSCRIPTIONAL REGULATOR, GNTR FAMILY"/>
    <property type="match status" value="1"/>
</dbReference>
<dbReference type="Pfam" id="PF07729">
    <property type="entry name" value="FCD"/>
    <property type="match status" value="1"/>
</dbReference>
<dbReference type="Pfam" id="PF00392">
    <property type="entry name" value="GntR"/>
    <property type="match status" value="1"/>
</dbReference>
<dbReference type="PRINTS" id="PR00035">
    <property type="entry name" value="HTHGNTR"/>
</dbReference>
<dbReference type="SMART" id="SM00895">
    <property type="entry name" value="FCD"/>
    <property type="match status" value="1"/>
</dbReference>
<dbReference type="SMART" id="SM00345">
    <property type="entry name" value="HTH_GNTR"/>
    <property type="match status" value="1"/>
</dbReference>
<dbReference type="SUPFAM" id="SSF48008">
    <property type="entry name" value="GntR ligand-binding domain-like"/>
    <property type="match status" value="1"/>
</dbReference>
<dbReference type="SUPFAM" id="SSF46785">
    <property type="entry name" value="Winged helix' DNA-binding domain"/>
    <property type="match status" value="1"/>
</dbReference>
<dbReference type="PROSITE" id="PS50949">
    <property type="entry name" value="HTH_GNTR"/>
    <property type="match status" value="1"/>
</dbReference>
<organism>
    <name type="scientific">Escherichia coli O6:K15:H31 (strain 536 / UPEC)</name>
    <dbReference type="NCBI Taxonomy" id="362663"/>
    <lineage>
        <taxon>Bacteria</taxon>
        <taxon>Pseudomonadati</taxon>
        <taxon>Pseudomonadota</taxon>
        <taxon>Gammaproteobacteria</taxon>
        <taxon>Enterobacterales</taxon>
        <taxon>Enterobacteriaceae</taxon>
        <taxon>Escherichia</taxon>
    </lineage>
</organism>
<keyword id="KW-0238">DNA-binding</keyword>
<keyword id="KW-0678">Repressor</keyword>
<keyword id="KW-0804">Transcription</keyword>
<keyword id="KW-0805">Transcription regulation</keyword>
<evidence type="ECO:0000255" key="1">
    <source>
        <dbReference type="HAMAP-Rule" id="MF_01236"/>
    </source>
</evidence>
<evidence type="ECO:0000256" key="2">
    <source>
        <dbReference type="SAM" id="MobiDB-lite"/>
    </source>
</evidence>
<feature type="chain" id="PRO_0000301524" description="HTH-type transcriptional repressor NanR">
    <location>
        <begin position="1"/>
        <end position="263"/>
    </location>
</feature>
<feature type="domain" description="HTH gntR-type" evidence="1">
    <location>
        <begin position="30"/>
        <end position="98"/>
    </location>
</feature>
<feature type="DNA-binding region" description="H-T-H motif" evidence="1">
    <location>
        <begin position="58"/>
        <end position="77"/>
    </location>
</feature>
<feature type="region of interest" description="Disordered" evidence="2">
    <location>
        <begin position="1"/>
        <end position="23"/>
    </location>
</feature>
<gene>
    <name evidence="1" type="primary">nanR</name>
    <name type="ordered locus">ECP_3309</name>
</gene>
<accession>Q0TCP0</accession>
<name>NANR_ECOL5</name>
<protein>
    <recommendedName>
        <fullName evidence="1">HTH-type transcriptional repressor NanR</fullName>
    </recommendedName>
</protein>
<sequence>MSPMNAFDPQAEDSTTTIGRNLRSRPLARKKLSEMVEEELEQMIRRREFGEGEQLPSERELMAFFNVGRPSVREALAALKRKGLVQINNGERARVSRPSADTIIGELSGMAKDFLSHPGGIAHFEQLRLFFESSLVRYAAEHATDEQIDLLAKALEINSQSLDNNAAFIRSDVDFHRVLAEIPGNPIFMAIHVALLDWLIAARPTVADQALHEHNNVSYQQHIAIVDAIRRHDPDEADRALQSHLNSVSATWHAFGQTTNKKK</sequence>
<comment type="function">
    <text evidence="1">Transcriptional repressor that controls expression of the genes required for the catabolism of sialic acids.</text>
</comment>
<comment type="similarity">
    <text evidence="1">Belongs to the NanR family.</text>
</comment>
<reference key="1">
    <citation type="journal article" date="2006" name="Mol. Microbiol.">
        <title>Role of pathogenicity island-associated integrases in the genome plasticity of uropathogenic Escherichia coli strain 536.</title>
        <authorList>
            <person name="Hochhut B."/>
            <person name="Wilde C."/>
            <person name="Balling G."/>
            <person name="Middendorf B."/>
            <person name="Dobrindt U."/>
            <person name="Brzuszkiewicz E."/>
            <person name="Gottschalk G."/>
            <person name="Carniel E."/>
            <person name="Hacker J."/>
        </authorList>
    </citation>
    <scope>NUCLEOTIDE SEQUENCE [LARGE SCALE GENOMIC DNA]</scope>
    <source>
        <strain>536 / UPEC</strain>
    </source>
</reference>
<proteinExistence type="inferred from homology"/>